<comment type="function">
    <text evidence="1">Catalyzes the ATP-dependent transfer of a sulfur to tRNA to produce 4-thiouridine in position 8 of tRNAs, which functions as a near-UV photosensor. Also catalyzes the transfer of sulfur to the sulfur carrier protein ThiS, forming ThiS-thiocarboxylate. This is a step in the synthesis of thiazole, in the thiamine biosynthesis pathway. The sulfur is donated as persulfide by IscS.</text>
</comment>
<comment type="catalytic activity">
    <reaction evidence="1">
        <text>[ThiI sulfur-carrier protein]-S-sulfanyl-L-cysteine + a uridine in tRNA + 2 reduced [2Fe-2S]-[ferredoxin] + ATP + H(+) = [ThiI sulfur-carrier protein]-L-cysteine + a 4-thiouridine in tRNA + 2 oxidized [2Fe-2S]-[ferredoxin] + AMP + diphosphate</text>
        <dbReference type="Rhea" id="RHEA:24176"/>
        <dbReference type="Rhea" id="RHEA-COMP:10000"/>
        <dbReference type="Rhea" id="RHEA-COMP:10001"/>
        <dbReference type="Rhea" id="RHEA-COMP:13337"/>
        <dbReference type="Rhea" id="RHEA-COMP:13338"/>
        <dbReference type="Rhea" id="RHEA-COMP:13339"/>
        <dbReference type="Rhea" id="RHEA-COMP:13340"/>
        <dbReference type="ChEBI" id="CHEBI:15378"/>
        <dbReference type="ChEBI" id="CHEBI:29950"/>
        <dbReference type="ChEBI" id="CHEBI:30616"/>
        <dbReference type="ChEBI" id="CHEBI:33019"/>
        <dbReference type="ChEBI" id="CHEBI:33737"/>
        <dbReference type="ChEBI" id="CHEBI:33738"/>
        <dbReference type="ChEBI" id="CHEBI:61963"/>
        <dbReference type="ChEBI" id="CHEBI:65315"/>
        <dbReference type="ChEBI" id="CHEBI:136798"/>
        <dbReference type="ChEBI" id="CHEBI:456215"/>
        <dbReference type="EC" id="2.8.1.4"/>
    </reaction>
</comment>
<comment type="catalytic activity">
    <reaction evidence="1">
        <text>[ThiS sulfur-carrier protein]-C-terminal Gly-Gly-AMP + S-sulfanyl-L-cysteinyl-[cysteine desulfurase] + AH2 = [ThiS sulfur-carrier protein]-C-terminal-Gly-aminoethanethioate + L-cysteinyl-[cysteine desulfurase] + A + AMP + 2 H(+)</text>
        <dbReference type="Rhea" id="RHEA:43340"/>
        <dbReference type="Rhea" id="RHEA-COMP:12157"/>
        <dbReference type="Rhea" id="RHEA-COMP:12158"/>
        <dbReference type="Rhea" id="RHEA-COMP:12910"/>
        <dbReference type="Rhea" id="RHEA-COMP:19908"/>
        <dbReference type="ChEBI" id="CHEBI:13193"/>
        <dbReference type="ChEBI" id="CHEBI:15378"/>
        <dbReference type="ChEBI" id="CHEBI:17499"/>
        <dbReference type="ChEBI" id="CHEBI:29950"/>
        <dbReference type="ChEBI" id="CHEBI:61963"/>
        <dbReference type="ChEBI" id="CHEBI:90618"/>
        <dbReference type="ChEBI" id="CHEBI:232372"/>
        <dbReference type="ChEBI" id="CHEBI:456215"/>
    </reaction>
</comment>
<comment type="pathway">
    <text evidence="1">Cofactor biosynthesis; thiamine diphosphate biosynthesis.</text>
</comment>
<comment type="subcellular location">
    <subcellularLocation>
        <location evidence="1">Cytoplasm</location>
    </subcellularLocation>
</comment>
<comment type="similarity">
    <text evidence="1">Belongs to the ThiI family.</text>
</comment>
<sequence>MKFIIKLFPEITIKSQSVRLRFIKILTGNIRNVLKHYDETLAVVRHWDNIEVRAKDENQRLAIRDALTRIPGIHHILEVEDVPFTDMHDIFEKALVQYRDQLEGKTFCVRVKRRGKHDFSSIDVERYVGGGLNQHIESARVKLTNPEVTVHLEVEDDRLLLIKGRYEGIGGFPIGTQEDVLSLISGGFDSGVSSYMLMRRGCRVHYCFFNLGGAAHEIGVRQVAHYLWNRFGSSHRVRFVAINFEPVVGEILEKIDDGQMGVILKRMMVRAASKVAERYGVQALVTGEALGQVSSQTLTNLRLIDNVSDTLILRPLISYDKEHIINLARQIGTEDFARTMPEYCGVISKSPTVKAVKSKIEAEEEKFDFSILDKVVEEVNNVDIREIAQQTEQEVVEVETVNGFGPNDVILDIRSIDEQEDKPLKVEGIDVVSLPFYKLSTKFGDLDQNRTWLLWCERGVMSRLQALYLREQGFNNVKVYRP</sequence>
<feature type="chain" id="PRO_1000116402" description="tRNA sulfurtransferase">
    <location>
        <begin position="1"/>
        <end position="482"/>
    </location>
</feature>
<feature type="domain" description="THUMP" evidence="1">
    <location>
        <begin position="61"/>
        <end position="165"/>
    </location>
</feature>
<feature type="domain" description="Rhodanese" evidence="1">
    <location>
        <begin position="404"/>
        <end position="482"/>
    </location>
</feature>
<feature type="active site" description="Cysteine persulfide intermediate" evidence="1">
    <location>
        <position position="456"/>
    </location>
</feature>
<feature type="binding site" evidence="1">
    <location>
        <begin position="183"/>
        <end position="184"/>
    </location>
    <ligand>
        <name>ATP</name>
        <dbReference type="ChEBI" id="CHEBI:30616"/>
    </ligand>
</feature>
<feature type="binding site" evidence="1">
    <location>
        <position position="265"/>
    </location>
    <ligand>
        <name>ATP</name>
        <dbReference type="ChEBI" id="CHEBI:30616"/>
    </ligand>
</feature>
<feature type="binding site" evidence="1">
    <location>
        <position position="287"/>
    </location>
    <ligand>
        <name>ATP</name>
        <dbReference type="ChEBI" id="CHEBI:30616"/>
    </ligand>
</feature>
<feature type="binding site" evidence="1">
    <location>
        <position position="296"/>
    </location>
    <ligand>
        <name>ATP</name>
        <dbReference type="ChEBI" id="CHEBI:30616"/>
    </ligand>
</feature>
<feature type="disulfide bond" description="Redox-active" evidence="1">
    <location>
        <begin position="344"/>
        <end position="456"/>
    </location>
</feature>
<name>THII_ECO8A</name>
<evidence type="ECO:0000255" key="1">
    <source>
        <dbReference type="HAMAP-Rule" id="MF_00021"/>
    </source>
</evidence>
<proteinExistence type="inferred from homology"/>
<keyword id="KW-0067">ATP-binding</keyword>
<keyword id="KW-0963">Cytoplasm</keyword>
<keyword id="KW-1015">Disulfide bond</keyword>
<keyword id="KW-0547">Nucleotide-binding</keyword>
<keyword id="KW-0676">Redox-active center</keyword>
<keyword id="KW-0694">RNA-binding</keyword>
<keyword id="KW-0784">Thiamine biosynthesis</keyword>
<keyword id="KW-0808">Transferase</keyword>
<keyword id="KW-0820">tRNA-binding</keyword>
<reference key="1">
    <citation type="journal article" date="2009" name="PLoS Genet.">
        <title>Organised genome dynamics in the Escherichia coli species results in highly diverse adaptive paths.</title>
        <authorList>
            <person name="Touchon M."/>
            <person name="Hoede C."/>
            <person name="Tenaillon O."/>
            <person name="Barbe V."/>
            <person name="Baeriswyl S."/>
            <person name="Bidet P."/>
            <person name="Bingen E."/>
            <person name="Bonacorsi S."/>
            <person name="Bouchier C."/>
            <person name="Bouvet O."/>
            <person name="Calteau A."/>
            <person name="Chiapello H."/>
            <person name="Clermont O."/>
            <person name="Cruveiller S."/>
            <person name="Danchin A."/>
            <person name="Diard M."/>
            <person name="Dossat C."/>
            <person name="Karoui M.E."/>
            <person name="Frapy E."/>
            <person name="Garry L."/>
            <person name="Ghigo J.M."/>
            <person name="Gilles A.M."/>
            <person name="Johnson J."/>
            <person name="Le Bouguenec C."/>
            <person name="Lescat M."/>
            <person name="Mangenot S."/>
            <person name="Martinez-Jehanne V."/>
            <person name="Matic I."/>
            <person name="Nassif X."/>
            <person name="Oztas S."/>
            <person name="Petit M.A."/>
            <person name="Pichon C."/>
            <person name="Rouy Z."/>
            <person name="Ruf C.S."/>
            <person name="Schneider D."/>
            <person name="Tourret J."/>
            <person name="Vacherie B."/>
            <person name="Vallenet D."/>
            <person name="Medigue C."/>
            <person name="Rocha E.P.C."/>
            <person name="Denamur E."/>
        </authorList>
    </citation>
    <scope>NUCLEOTIDE SEQUENCE [LARGE SCALE GENOMIC DNA]</scope>
    <source>
        <strain>IAI1</strain>
    </source>
</reference>
<accession>B7M3R2</accession>
<protein>
    <recommendedName>
        <fullName evidence="1">tRNA sulfurtransferase</fullName>
        <ecNumber evidence="1">2.8.1.4</ecNumber>
    </recommendedName>
    <alternativeName>
        <fullName evidence="1">Sulfur carrier protein ThiS sulfurtransferase</fullName>
    </alternativeName>
    <alternativeName>
        <fullName evidence="1">Thiamine biosynthesis protein ThiI</fullName>
    </alternativeName>
    <alternativeName>
        <fullName evidence="1">tRNA 4-thiouridine synthase</fullName>
    </alternativeName>
</protein>
<gene>
    <name evidence="1" type="primary">thiI</name>
    <name type="ordered locus">ECIAI1_0423</name>
</gene>
<organism>
    <name type="scientific">Escherichia coli O8 (strain IAI1)</name>
    <dbReference type="NCBI Taxonomy" id="585034"/>
    <lineage>
        <taxon>Bacteria</taxon>
        <taxon>Pseudomonadati</taxon>
        <taxon>Pseudomonadota</taxon>
        <taxon>Gammaproteobacteria</taxon>
        <taxon>Enterobacterales</taxon>
        <taxon>Enterobacteriaceae</taxon>
        <taxon>Escherichia</taxon>
    </lineage>
</organism>
<dbReference type="EC" id="2.8.1.4" evidence="1"/>
<dbReference type="EMBL" id="CU928160">
    <property type="protein sequence ID" value="CAQ97295.1"/>
    <property type="molecule type" value="Genomic_DNA"/>
</dbReference>
<dbReference type="RefSeq" id="WP_000668691.1">
    <property type="nucleotide sequence ID" value="NC_011741.1"/>
</dbReference>
<dbReference type="SMR" id="B7M3R2"/>
<dbReference type="KEGG" id="ecr:ECIAI1_0423"/>
<dbReference type="HOGENOM" id="CLU_037952_4_1_6"/>
<dbReference type="UniPathway" id="UPA00060"/>
<dbReference type="GO" id="GO:0005829">
    <property type="term" value="C:cytosol"/>
    <property type="evidence" value="ECO:0007669"/>
    <property type="project" value="TreeGrafter"/>
</dbReference>
<dbReference type="GO" id="GO:0005524">
    <property type="term" value="F:ATP binding"/>
    <property type="evidence" value="ECO:0007669"/>
    <property type="project" value="UniProtKB-UniRule"/>
</dbReference>
<dbReference type="GO" id="GO:0004810">
    <property type="term" value="F:CCA tRNA nucleotidyltransferase activity"/>
    <property type="evidence" value="ECO:0007669"/>
    <property type="project" value="InterPro"/>
</dbReference>
<dbReference type="GO" id="GO:0000049">
    <property type="term" value="F:tRNA binding"/>
    <property type="evidence" value="ECO:0007669"/>
    <property type="project" value="UniProtKB-UniRule"/>
</dbReference>
<dbReference type="GO" id="GO:0140741">
    <property type="term" value="F:tRNA-uracil-4 sulfurtransferase activity"/>
    <property type="evidence" value="ECO:0007669"/>
    <property type="project" value="UniProtKB-EC"/>
</dbReference>
<dbReference type="GO" id="GO:0009228">
    <property type="term" value="P:thiamine biosynthetic process"/>
    <property type="evidence" value="ECO:0007669"/>
    <property type="project" value="UniProtKB-KW"/>
</dbReference>
<dbReference type="GO" id="GO:0009229">
    <property type="term" value="P:thiamine diphosphate biosynthetic process"/>
    <property type="evidence" value="ECO:0007669"/>
    <property type="project" value="UniProtKB-UniRule"/>
</dbReference>
<dbReference type="GO" id="GO:0052837">
    <property type="term" value="P:thiazole biosynthetic process"/>
    <property type="evidence" value="ECO:0007669"/>
    <property type="project" value="InterPro"/>
</dbReference>
<dbReference type="GO" id="GO:0002937">
    <property type="term" value="P:tRNA 4-thiouridine biosynthesis"/>
    <property type="evidence" value="ECO:0007669"/>
    <property type="project" value="TreeGrafter"/>
</dbReference>
<dbReference type="CDD" id="cd01712">
    <property type="entry name" value="PPase_ThiI"/>
    <property type="match status" value="1"/>
</dbReference>
<dbReference type="CDD" id="cd00158">
    <property type="entry name" value="RHOD"/>
    <property type="match status" value="1"/>
</dbReference>
<dbReference type="CDD" id="cd11716">
    <property type="entry name" value="THUMP_ThiI"/>
    <property type="match status" value="1"/>
</dbReference>
<dbReference type="FunFam" id="3.30.2130.30:FF:000002">
    <property type="entry name" value="tRNA sulfurtransferase"/>
    <property type="match status" value="1"/>
</dbReference>
<dbReference type="FunFam" id="3.40.250.10:FF:000003">
    <property type="entry name" value="tRNA sulfurtransferase"/>
    <property type="match status" value="1"/>
</dbReference>
<dbReference type="FunFam" id="3.40.50.620:FF:000029">
    <property type="entry name" value="tRNA sulfurtransferase"/>
    <property type="match status" value="1"/>
</dbReference>
<dbReference type="Gene3D" id="3.30.2130.30">
    <property type="match status" value="1"/>
</dbReference>
<dbReference type="Gene3D" id="3.40.50.620">
    <property type="entry name" value="HUPs"/>
    <property type="match status" value="1"/>
</dbReference>
<dbReference type="Gene3D" id="3.40.250.10">
    <property type="entry name" value="Rhodanese-like domain"/>
    <property type="match status" value="1"/>
</dbReference>
<dbReference type="HAMAP" id="MF_00021">
    <property type="entry name" value="ThiI"/>
    <property type="match status" value="1"/>
</dbReference>
<dbReference type="InterPro" id="IPR001763">
    <property type="entry name" value="Rhodanese-like_dom"/>
</dbReference>
<dbReference type="InterPro" id="IPR036873">
    <property type="entry name" value="Rhodanese-like_dom_sf"/>
</dbReference>
<dbReference type="InterPro" id="IPR014729">
    <property type="entry name" value="Rossmann-like_a/b/a_fold"/>
</dbReference>
<dbReference type="InterPro" id="IPR020536">
    <property type="entry name" value="ThiI_AANH"/>
</dbReference>
<dbReference type="InterPro" id="IPR054173">
    <property type="entry name" value="ThiI_fer"/>
</dbReference>
<dbReference type="InterPro" id="IPR049961">
    <property type="entry name" value="ThiI_N"/>
</dbReference>
<dbReference type="InterPro" id="IPR026340">
    <property type="entry name" value="THII_Thiazole_biosynth_dom"/>
</dbReference>
<dbReference type="InterPro" id="IPR004114">
    <property type="entry name" value="THUMP_dom"/>
</dbReference>
<dbReference type="InterPro" id="IPR049962">
    <property type="entry name" value="THUMP_ThiI"/>
</dbReference>
<dbReference type="InterPro" id="IPR003720">
    <property type="entry name" value="tRNA_STrfase"/>
</dbReference>
<dbReference type="InterPro" id="IPR050102">
    <property type="entry name" value="tRNA_sulfurtransferase_ThiI"/>
</dbReference>
<dbReference type="NCBIfam" id="TIGR04271">
    <property type="entry name" value="ThiI_C_thiazole"/>
    <property type="match status" value="1"/>
</dbReference>
<dbReference type="NCBIfam" id="TIGR00342">
    <property type="entry name" value="tRNA uracil 4-sulfurtransferase ThiI"/>
    <property type="match status" value="1"/>
</dbReference>
<dbReference type="PANTHER" id="PTHR43209">
    <property type="entry name" value="TRNA SULFURTRANSFERASE"/>
    <property type="match status" value="1"/>
</dbReference>
<dbReference type="PANTHER" id="PTHR43209:SF1">
    <property type="entry name" value="TRNA SULFURTRANSFERASE"/>
    <property type="match status" value="1"/>
</dbReference>
<dbReference type="Pfam" id="PF02568">
    <property type="entry name" value="ThiI"/>
    <property type="match status" value="1"/>
</dbReference>
<dbReference type="Pfam" id="PF22025">
    <property type="entry name" value="ThiI_fer"/>
    <property type="match status" value="1"/>
</dbReference>
<dbReference type="Pfam" id="PF02926">
    <property type="entry name" value="THUMP"/>
    <property type="match status" value="1"/>
</dbReference>
<dbReference type="SMART" id="SM00981">
    <property type="entry name" value="THUMP"/>
    <property type="match status" value="1"/>
</dbReference>
<dbReference type="SUPFAM" id="SSF52402">
    <property type="entry name" value="Adenine nucleotide alpha hydrolases-like"/>
    <property type="match status" value="1"/>
</dbReference>
<dbReference type="SUPFAM" id="SSF52821">
    <property type="entry name" value="Rhodanese/Cell cycle control phosphatase"/>
    <property type="match status" value="1"/>
</dbReference>
<dbReference type="SUPFAM" id="SSF143437">
    <property type="entry name" value="THUMP domain-like"/>
    <property type="match status" value="1"/>
</dbReference>
<dbReference type="PROSITE" id="PS50206">
    <property type="entry name" value="RHODANESE_3"/>
    <property type="match status" value="1"/>
</dbReference>
<dbReference type="PROSITE" id="PS51165">
    <property type="entry name" value="THUMP"/>
    <property type="match status" value="1"/>
</dbReference>